<gene>
    <name evidence="1" type="primary">eco</name>
    <name type="ordered locus">Pfl01_2620</name>
</gene>
<name>ECOT_PSEPF</name>
<comment type="function">
    <text evidence="1">General inhibitor of family S1 serine proteases.</text>
</comment>
<comment type="subunit">
    <text evidence="1">Homodimer.</text>
</comment>
<comment type="subcellular location">
    <subcellularLocation>
        <location evidence="1">Periplasm</location>
    </subcellularLocation>
</comment>
<comment type="similarity">
    <text evidence="1">Belongs to the protease inhibitor I11 (ecotin) family.</text>
</comment>
<protein>
    <recommendedName>
        <fullName evidence="1">Ecotin</fullName>
    </recommendedName>
</protein>
<keyword id="KW-1015">Disulfide bond</keyword>
<keyword id="KW-0574">Periplasm</keyword>
<keyword id="KW-0646">Protease inhibitor</keyword>
<keyword id="KW-0722">Serine protease inhibitor</keyword>
<keyword id="KW-0732">Signal</keyword>
<organism>
    <name type="scientific">Pseudomonas fluorescens (strain Pf0-1)</name>
    <dbReference type="NCBI Taxonomy" id="205922"/>
    <lineage>
        <taxon>Bacteria</taxon>
        <taxon>Pseudomonadati</taxon>
        <taxon>Pseudomonadota</taxon>
        <taxon>Gammaproteobacteria</taxon>
        <taxon>Pseudomonadales</taxon>
        <taxon>Pseudomonadaceae</taxon>
        <taxon>Pseudomonas</taxon>
    </lineage>
</organism>
<evidence type="ECO:0000255" key="1">
    <source>
        <dbReference type="HAMAP-Rule" id="MF_00706"/>
    </source>
</evidence>
<accession>Q3KCZ4</accession>
<sequence>MGNFTVRATAGLMLASLSTLAHAAKLEDTAPYPKAEAGFTRQVIHLPQQAQEENFKVEILAGKTLEVDCNRQRLGGTLEEKNLEGWGYPFYRLEKVSGPMSTLMACPPGTQKKRVFVPVIGDGFTVRYNSKLPIVVYAPQDVEVRFRIWSASDKIGVAIPE</sequence>
<feature type="signal peptide" evidence="1">
    <location>
        <begin position="1"/>
        <end position="23"/>
    </location>
</feature>
<feature type="chain" id="PRO_0000244883" description="Ecotin">
    <location>
        <begin position="24"/>
        <end position="161"/>
    </location>
</feature>
<feature type="site" description="Reactive bond" evidence="1">
    <location>
        <begin position="103"/>
        <end position="104"/>
    </location>
</feature>
<feature type="disulfide bond" evidence="1">
    <location>
        <begin position="69"/>
        <end position="106"/>
    </location>
</feature>
<proteinExistence type="inferred from homology"/>
<reference key="1">
    <citation type="journal article" date="2009" name="Genome Biol.">
        <title>Genomic and genetic analyses of diversity and plant interactions of Pseudomonas fluorescens.</title>
        <authorList>
            <person name="Silby M.W."/>
            <person name="Cerdeno-Tarraga A.M."/>
            <person name="Vernikos G.S."/>
            <person name="Giddens S.R."/>
            <person name="Jackson R.W."/>
            <person name="Preston G.M."/>
            <person name="Zhang X.-X."/>
            <person name="Moon C.D."/>
            <person name="Gehrig S.M."/>
            <person name="Godfrey S.A.C."/>
            <person name="Knight C.G."/>
            <person name="Malone J.G."/>
            <person name="Robinson Z."/>
            <person name="Spiers A.J."/>
            <person name="Harris S."/>
            <person name="Challis G.L."/>
            <person name="Yaxley A.M."/>
            <person name="Harris D."/>
            <person name="Seeger K."/>
            <person name="Murphy L."/>
            <person name="Rutter S."/>
            <person name="Squares R."/>
            <person name="Quail M.A."/>
            <person name="Saunders E."/>
            <person name="Mavromatis K."/>
            <person name="Brettin T.S."/>
            <person name="Bentley S.D."/>
            <person name="Hothersall J."/>
            <person name="Stephens E."/>
            <person name="Thomas C.M."/>
            <person name="Parkhill J."/>
            <person name="Levy S.B."/>
            <person name="Rainey P.B."/>
            <person name="Thomson N.R."/>
        </authorList>
    </citation>
    <scope>NUCLEOTIDE SEQUENCE [LARGE SCALE GENOMIC DNA]</scope>
    <source>
        <strain>Pf0-1</strain>
    </source>
</reference>
<dbReference type="EMBL" id="CP000094">
    <property type="protein sequence ID" value="ABA74361.1"/>
    <property type="molecule type" value="Genomic_DNA"/>
</dbReference>
<dbReference type="RefSeq" id="WP_011334035.1">
    <property type="nucleotide sequence ID" value="NC_007492.2"/>
</dbReference>
<dbReference type="SMR" id="Q3KCZ4"/>
<dbReference type="MEROPS" id="I11.001"/>
<dbReference type="KEGG" id="pfo:Pfl01_2620"/>
<dbReference type="eggNOG" id="COG4574">
    <property type="taxonomic scope" value="Bacteria"/>
</dbReference>
<dbReference type="HOGENOM" id="CLU_111565_0_0_6"/>
<dbReference type="Proteomes" id="UP000002704">
    <property type="component" value="Chromosome"/>
</dbReference>
<dbReference type="GO" id="GO:0042597">
    <property type="term" value="C:periplasmic space"/>
    <property type="evidence" value="ECO:0007669"/>
    <property type="project" value="UniProtKB-SubCell"/>
</dbReference>
<dbReference type="GO" id="GO:0004867">
    <property type="term" value="F:serine-type endopeptidase inhibitor activity"/>
    <property type="evidence" value="ECO:0007669"/>
    <property type="project" value="UniProtKB-UniRule"/>
</dbReference>
<dbReference type="Gene3D" id="2.60.40.550">
    <property type="entry name" value="Ecotin"/>
    <property type="match status" value="1"/>
</dbReference>
<dbReference type="Gene3D" id="4.10.1230.10">
    <property type="entry name" value="Ecotin, trypsin inhibitor"/>
    <property type="match status" value="1"/>
</dbReference>
<dbReference type="HAMAP" id="MF_00706">
    <property type="entry name" value="Ecotin"/>
    <property type="match status" value="1"/>
</dbReference>
<dbReference type="InterPro" id="IPR027438">
    <property type="entry name" value="Ecotin_C"/>
</dbReference>
<dbReference type="InterPro" id="IPR036198">
    <property type="entry name" value="Ecotin_sf"/>
</dbReference>
<dbReference type="InterPro" id="IPR005658">
    <property type="entry name" value="Prot_inh_ecotin"/>
</dbReference>
<dbReference type="InterPro" id="IPR023084">
    <property type="entry name" value="Prot_inh_ecotin_gammaproteobac"/>
</dbReference>
<dbReference type="NCBIfam" id="NF002987">
    <property type="entry name" value="PRK03719.1"/>
    <property type="match status" value="1"/>
</dbReference>
<dbReference type="PANTHER" id="PTHR35890">
    <property type="match status" value="1"/>
</dbReference>
<dbReference type="PANTHER" id="PTHR35890:SF3">
    <property type="entry name" value="ECOTIN"/>
    <property type="match status" value="1"/>
</dbReference>
<dbReference type="Pfam" id="PF03974">
    <property type="entry name" value="Ecotin"/>
    <property type="match status" value="1"/>
</dbReference>
<dbReference type="PIRSF" id="PIRSF006865">
    <property type="entry name" value="Prot_inh_ecotin"/>
    <property type="match status" value="1"/>
</dbReference>
<dbReference type="SUPFAM" id="SSF49772">
    <property type="entry name" value="Ecotin, trypsin inhibitor"/>
    <property type="match status" value="1"/>
</dbReference>